<gene>
    <name evidence="1" type="primary">clpX</name>
    <name type="ordered locus">EF_1917</name>
</gene>
<feature type="chain" id="PRO_0000160355" description="ATP-dependent Clp protease ATP-binding subunit ClpX">
    <location>
        <begin position="1"/>
        <end position="417"/>
    </location>
</feature>
<feature type="domain" description="ClpX-type ZB" evidence="2">
    <location>
        <begin position="1"/>
        <end position="54"/>
    </location>
</feature>
<feature type="binding site" evidence="2">
    <location>
        <position position="13"/>
    </location>
    <ligand>
        <name>Zn(2+)</name>
        <dbReference type="ChEBI" id="CHEBI:29105"/>
    </ligand>
</feature>
<feature type="binding site" evidence="2">
    <location>
        <position position="16"/>
    </location>
    <ligand>
        <name>Zn(2+)</name>
        <dbReference type="ChEBI" id="CHEBI:29105"/>
    </ligand>
</feature>
<feature type="binding site" evidence="2">
    <location>
        <position position="35"/>
    </location>
    <ligand>
        <name>Zn(2+)</name>
        <dbReference type="ChEBI" id="CHEBI:29105"/>
    </ligand>
</feature>
<feature type="binding site" evidence="2">
    <location>
        <position position="38"/>
    </location>
    <ligand>
        <name>Zn(2+)</name>
        <dbReference type="ChEBI" id="CHEBI:29105"/>
    </ligand>
</feature>
<feature type="binding site" evidence="1">
    <location>
        <begin position="120"/>
        <end position="127"/>
    </location>
    <ligand>
        <name>ATP</name>
        <dbReference type="ChEBI" id="CHEBI:30616"/>
    </ligand>
</feature>
<dbReference type="EMBL" id="AE016830">
    <property type="protein sequence ID" value="AAO81669.1"/>
    <property type="molecule type" value="Genomic_DNA"/>
</dbReference>
<dbReference type="RefSeq" id="NP_815599.1">
    <property type="nucleotide sequence ID" value="NC_004668.1"/>
</dbReference>
<dbReference type="RefSeq" id="WP_002357154.1">
    <property type="nucleotide sequence ID" value="NZ_KE136528.1"/>
</dbReference>
<dbReference type="SMR" id="Q833M7"/>
<dbReference type="STRING" id="226185.EF_1917"/>
<dbReference type="EnsemblBacteria" id="AAO81669">
    <property type="protein sequence ID" value="AAO81669"/>
    <property type="gene ID" value="EF_1917"/>
</dbReference>
<dbReference type="KEGG" id="efa:EF1917"/>
<dbReference type="PATRIC" id="fig|226185.45.peg.1601"/>
<dbReference type="eggNOG" id="COG1219">
    <property type="taxonomic scope" value="Bacteria"/>
</dbReference>
<dbReference type="HOGENOM" id="CLU_014218_8_2_9"/>
<dbReference type="Proteomes" id="UP000001415">
    <property type="component" value="Chromosome"/>
</dbReference>
<dbReference type="GO" id="GO:0009376">
    <property type="term" value="C:HslUV protease complex"/>
    <property type="evidence" value="ECO:0007669"/>
    <property type="project" value="TreeGrafter"/>
</dbReference>
<dbReference type="GO" id="GO:0005524">
    <property type="term" value="F:ATP binding"/>
    <property type="evidence" value="ECO:0007669"/>
    <property type="project" value="UniProtKB-UniRule"/>
</dbReference>
<dbReference type="GO" id="GO:0016887">
    <property type="term" value="F:ATP hydrolysis activity"/>
    <property type="evidence" value="ECO:0007669"/>
    <property type="project" value="InterPro"/>
</dbReference>
<dbReference type="GO" id="GO:0140662">
    <property type="term" value="F:ATP-dependent protein folding chaperone"/>
    <property type="evidence" value="ECO:0007669"/>
    <property type="project" value="InterPro"/>
</dbReference>
<dbReference type="GO" id="GO:0046983">
    <property type="term" value="F:protein dimerization activity"/>
    <property type="evidence" value="ECO:0007669"/>
    <property type="project" value="InterPro"/>
</dbReference>
<dbReference type="GO" id="GO:0051082">
    <property type="term" value="F:unfolded protein binding"/>
    <property type="evidence" value="ECO:0007669"/>
    <property type="project" value="UniProtKB-UniRule"/>
</dbReference>
<dbReference type="GO" id="GO:0008270">
    <property type="term" value="F:zinc ion binding"/>
    <property type="evidence" value="ECO:0007669"/>
    <property type="project" value="InterPro"/>
</dbReference>
<dbReference type="GO" id="GO:0051301">
    <property type="term" value="P:cell division"/>
    <property type="evidence" value="ECO:0007669"/>
    <property type="project" value="TreeGrafter"/>
</dbReference>
<dbReference type="GO" id="GO:0051603">
    <property type="term" value="P:proteolysis involved in protein catabolic process"/>
    <property type="evidence" value="ECO:0007669"/>
    <property type="project" value="TreeGrafter"/>
</dbReference>
<dbReference type="CDD" id="cd19497">
    <property type="entry name" value="RecA-like_ClpX"/>
    <property type="match status" value="1"/>
</dbReference>
<dbReference type="FunFam" id="1.10.8.60:FF:000002">
    <property type="entry name" value="ATP-dependent Clp protease ATP-binding subunit ClpX"/>
    <property type="match status" value="1"/>
</dbReference>
<dbReference type="FunFam" id="3.40.50.300:FF:000005">
    <property type="entry name" value="ATP-dependent Clp protease ATP-binding subunit ClpX"/>
    <property type="match status" value="1"/>
</dbReference>
<dbReference type="Gene3D" id="1.10.8.60">
    <property type="match status" value="1"/>
</dbReference>
<dbReference type="Gene3D" id="6.20.220.10">
    <property type="entry name" value="ClpX chaperone, C4-type zinc finger domain"/>
    <property type="match status" value="1"/>
</dbReference>
<dbReference type="Gene3D" id="3.40.50.300">
    <property type="entry name" value="P-loop containing nucleotide triphosphate hydrolases"/>
    <property type="match status" value="1"/>
</dbReference>
<dbReference type="HAMAP" id="MF_00175">
    <property type="entry name" value="ClpX"/>
    <property type="match status" value="1"/>
</dbReference>
<dbReference type="InterPro" id="IPR003593">
    <property type="entry name" value="AAA+_ATPase"/>
</dbReference>
<dbReference type="InterPro" id="IPR050052">
    <property type="entry name" value="ATP-dep_Clp_protease_ClpX"/>
</dbReference>
<dbReference type="InterPro" id="IPR003959">
    <property type="entry name" value="ATPase_AAA_core"/>
</dbReference>
<dbReference type="InterPro" id="IPR019489">
    <property type="entry name" value="Clp_ATPase_C"/>
</dbReference>
<dbReference type="InterPro" id="IPR004487">
    <property type="entry name" value="Clp_protease_ATP-bd_su_ClpX"/>
</dbReference>
<dbReference type="InterPro" id="IPR046425">
    <property type="entry name" value="ClpX_bact"/>
</dbReference>
<dbReference type="InterPro" id="IPR027417">
    <property type="entry name" value="P-loop_NTPase"/>
</dbReference>
<dbReference type="InterPro" id="IPR010603">
    <property type="entry name" value="Znf_CppX_C4"/>
</dbReference>
<dbReference type="InterPro" id="IPR038366">
    <property type="entry name" value="Znf_CppX_C4_sf"/>
</dbReference>
<dbReference type="NCBIfam" id="TIGR00382">
    <property type="entry name" value="clpX"/>
    <property type="match status" value="1"/>
</dbReference>
<dbReference type="NCBIfam" id="NF003745">
    <property type="entry name" value="PRK05342.1"/>
    <property type="match status" value="1"/>
</dbReference>
<dbReference type="PANTHER" id="PTHR48102:SF7">
    <property type="entry name" value="ATP-DEPENDENT CLP PROTEASE ATP-BINDING SUBUNIT CLPX-LIKE, MITOCHONDRIAL"/>
    <property type="match status" value="1"/>
</dbReference>
<dbReference type="PANTHER" id="PTHR48102">
    <property type="entry name" value="ATP-DEPENDENT CLP PROTEASE ATP-BINDING SUBUNIT CLPX-LIKE, MITOCHONDRIAL-RELATED"/>
    <property type="match status" value="1"/>
</dbReference>
<dbReference type="Pfam" id="PF07724">
    <property type="entry name" value="AAA_2"/>
    <property type="match status" value="1"/>
</dbReference>
<dbReference type="Pfam" id="PF10431">
    <property type="entry name" value="ClpB_D2-small"/>
    <property type="match status" value="1"/>
</dbReference>
<dbReference type="Pfam" id="PF06689">
    <property type="entry name" value="zf-C4_ClpX"/>
    <property type="match status" value="1"/>
</dbReference>
<dbReference type="SMART" id="SM00382">
    <property type="entry name" value="AAA"/>
    <property type="match status" value="1"/>
</dbReference>
<dbReference type="SMART" id="SM01086">
    <property type="entry name" value="ClpB_D2-small"/>
    <property type="match status" value="1"/>
</dbReference>
<dbReference type="SMART" id="SM00994">
    <property type="entry name" value="zf-C4_ClpX"/>
    <property type="match status" value="1"/>
</dbReference>
<dbReference type="SUPFAM" id="SSF57716">
    <property type="entry name" value="Glucocorticoid receptor-like (DNA-binding domain)"/>
    <property type="match status" value="1"/>
</dbReference>
<dbReference type="SUPFAM" id="SSF52540">
    <property type="entry name" value="P-loop containing nucleoside triphosphate hydrolases"/>
    <property type="match status" value="1"/>
</dbReference>
<dbReference type="PROSITE" id="PS51902">
    <property type="entry name" value="CLPX_ZB"/>
    <property type="match status" value="1"/>
</dbReference>
<proteinExistence type="inferred from homology"/>
<sequence length="417" mass="46111">MYDNTDNNGTVRCSFCGKTQEEVKKIVAGPGVYICNECIDLCKEIIDEEFYDEAVRELTDVPKPQEILNVLNEYVIGQERAKRTLSVAVYNHYKRVNQSETAATQDDVELQKSNICLIGPTGSGKTFLAQTLAKTLNVPFAIADATSLTEAGYVGEDVENILLKLLQSADYNVERAEKGIIYIDEIDKIARKSENVSITRDVSGEGVQQALLKILEGTVASVPPQGGRKHPHQEFIQIDTTNVLFIVGGAFDGIETIVKNRLGEKTIGFGKTNSALNEEESIMQHIIPEDLLKFGLIPEFIGRLPVMAALDKLTNDDLVRILTEPKNALVKQYQKLLSLDDTKLEFEPEALKAIAAKAIERNTGARGLRSIIEEIMMDVMFDVPSDESIEKVIITKMAAEGTGKPTIIYNKKDKEAV</sequence>
<evidence type="ECO:0000255" key="1">
    <source>
        <dbReference type="HAMAP-Rule" id="MF_00175"/>
    </source>
</evidence>
<evidence type="ECO:0000255" key="2">
    <source>
        <dbReference type="PROSITE-ProRule" id="PRU01250"/>
    </source>
</evidence>
<organism>
    <name type="scientific">Enterococcus faecalis (strain ATCC 700802 / V583)</name>
    <dbReference type="NCBI Taxonomy" id="226185"/>
    <lineage>
        <taxon>Bacteria</taxon>
        <taxon>Bacillati</taxon>
        <taxon>Bacillota</taxon>
        <taxon>Bacilli</taxon>
        <taxon>Lactobacillales</taxon>
        <taxon>Enterococcaceae</taxon>
        <taxon>Enterococcus</taxon>
    </lineage>
</organism>
<accession>Q833M7</accession>
<comment type="function">
    <text evidence="1">ATP-dependent specificity component of the Clp protease. It directs the protease to specific substrates. Can perform chaperone functions in the absence of ClpP.</text>
</comment>
<comment type="subunit">
    <text evidence="1">Component of the ClpX-ClpP complex. Forms a hexameric ring that, in the presence of ATP, binds to fourteen ClpP subunits assembled into a disk-like structure with a central cavity, resembling the structure of eukaryotic proteasomes.</text>
</comment>
<comment type="similarity">
    <text evidence="1">Belongs to the ClpX chaperone family.</text>
</comment>
<reference key="1">
    <citation type="journal article" date="2003" name="Science">
        <title>Role of mobile DNA in the evolution of vancomycin-resistant Enterococcus faecalis.</title>
        <authorList>
            <person name="Paulsen I.T."/>
            <person name="Banerjei L."/>
            <person name="Myers G.S.A."/>
            <person name="Nelson K.E."/>
            <person name="Seshadri R."/>
            <person name="Read T.D."/>
            <person name="Fouts D.E."/>
            <person name="Eisen J.A."/>
            <person name="Gill S.R."/>
            <person name="Heidelberg J.F."/>
            <person name="Tettelin H."/>
            <person name="Dodson R.J."/>
            <person name="Umayam L.A."/>
            <person name="Brinkac L.M."/>
            <person name="Beanan M.J."/>
            <person name="Daugherty S.C."/>
            <person name="DeBoy R.T."/>
            <person name="Durkin S.A."/>
            <person name="Kolonay J.F."/>
            <person name="Madupu R."/>
            <person name="Nelson W.C."/>
            <person name="Vamathevan J.J."/>
            <person name="Tran B."/>
            <person name="Upton J."/>
            <person name="Hansen T."/>
            <person name="Shetty J."/>
            <person name="Khouri H.M."/>
            <person name="Utterback T.R."/>
            <person name="Radune D."/>
            <person name="Ketchum K.A."/>
            <person name="Dougherty B.A."/>
            <person name="Fraser C.M."/>
        </authorList>
    </citation>
    <scope>NUCLEOTIDE SEQUENCE [LARGE SCALE GENOMIC DNA]</scope>
    <source>
        <strain>ATCC 700802 / V583</strain>
    </source>
</reference>
<keyword id="KW-0067">ATP-binding</keyword>
<keyword id="KW-0143">Chaperone</keyword>
<keyword id="KW-0479">Metal-binding</keyword>
<keyword id="KW-0547">Nucleotide-binding</keyword>
<keyword id="KW-1185">Reference proteome</keyword>
<keyword id="KW-0862">Zinc</keyword>
<protein>
    <recommendedName>
        <fullName evidence="1">ATP-dependent Clp protease ATP-binding subunit ClpX</fullName>
    </recommendedName>
</protein>
<name>CLPX_ENTFA</name>